<name>THII_HAEDU</name>
<proteinExistence type="inferred from homology"/>
<dbReference type="EC" id="2.8.1.4" evidence="1"/>
<dbReference type="EMBL" id="AE017143">
    <property type="protein sequence ID" value="AAP96556.1"/>
    <property type="molecule type" value="Genomic_DNA"/>
</dbReference>
<dbReference type="RefSeq" id="WP_010945585.1">
    <property type="nucleotide sequence ID" value="NC_002940.2"/>
</dbReference>
<dbReference type="SMR" id="Q7VKR6"/>
<dbReference type="STRING" id="233412.HD_1806"/>
<dbReference type="KEGG" id="hdu:HD_1806"/>
<dbReference type="eggNOG" id="COG0301">
    <property type="taxonomic scope" value="Bacteria"/>
</dbReference>
<dbReference type="eggNOG" id="COG0607">
    <property type="taxonomic scope" value="Bacteria"/>
</dbReference>
<dbReference type="HOGENOM" id="CLU_037952_4_1_6"/>
<dbReference type="OrthoDB" id="9773948at2"/>
<dbReference type="UniPathway" id="UPA00060"/>
<dbReference type="Proteomes" id="UP000001022">
    <property type="component" value="Chromosome"/>
</dbReference>
<dbReference type="GO" id="GO:0005829">
    <property type="term" value="C:cytosol"/>
    <property type="evidence" value="ECO:0007669"/>
    <property type="project" value="TreeGrafter"/>
</dbReference>
<dbReference type="GO" id="GO:0005524">
    <property type="term" value="F:ATP binding"/>
    <property type="evidence" value="ECO:0007669"/>
    <property type="project" value="UniProtKB-UniRule"/>
</dbReference>
<dbReference type="GO" id="GO:0004810">
    <property type="term" value="F:CCA tRNA nucleotidyltransferase activity"/>
    <property type="evidence" value="ECO:0007669"/>
    <property type="project" value="InterPro"/>
</dbReference>
<dbReference type="GO" id="GO:0000049">
    <property type="term" value="F:tRNA binding"/>
    <property type="evidence" value="ECO:0007669"/>
    <property type="project" value="UniProtKB-UniRule"/>
</dbReference>
<dbReference type="GO" id="GO:0140741">
    <property type="term" value="F:tRNA-uracil-4 sulfurtransferase activity"/>
    <property type="evidence" value="ECO:0007669"/>
    <property type="project" value="UniProtKB-EC"/>
</dbReference>
<dbReference type="GO" id="GO:0009228">
    <property type="term" value="P:thiamine biosynthetic process"/>
    <property type="evidence" value="ECO:0007669"/>
    <property type="project" value="UniProtKB-KW"/>
</dbReference>
<dbReference type="GO" id="GO:0009229">
    <property type="term" value="P:thiamine diphosphate biosynthetic process"/>
    <property type="evidence" value="ECO:0007669"/>
    <property type="project" value="UniProtKB-UniRule"/>
</dbReference>
<dbReference type="GO" id="GO:0052837">
    <property type="term" value="P:thiazole biosynthetic process"/>
    <property type="evidence" value="ECO:0007669"/>
    <property type="project" value="InterPro"/>
</dbReference>
<dbReference type="GO" id="GO:0002937">
    <property type="term" value="P:tRNA 4-thiouridine biosynthesis"/>
    <property type="evidence" value="ECO:0007669"/>
    <property type="project" value="TreeGrafter"/>
</dbReference>
<dbReference type="CDD" id="cd01712">
    <property type="entry name" value="PPase_ThiI"/>
    <property type="match status" value="1"/>
</dbReference>
<dbReference type="CDD" id="cd00158">
    <property type="entry name" value="RHOD"/>
    <property type="match status" value="1"/>
</dbReference>
<dbReference type="CDD" id="cd11716">
    <property type="entry name" value="THUMP_ThiI"/>
    <property type="match status" value="1"/>
</dbReference>
<dbReference type="FunFam" id="3.40.50.620:FF:000029">
    <property type="entry name" value="tRNA sulfurtransferase"/>
    <property type="match status" value="1"/>
</dbReference>
<dbReference type="Gene3D" id="3.30.2130.30">
    <property type="match status" value="1"/>
</dbReference>
<dbReference type="Gene3D" id="3.40.50.620">
    <property type="entry name" value="HUPs"/>
    <property type="match status" value="1"/>
</dbReference>
<dbReference type="Gene3D" id="3.40.250.10">
    <property type="entry name" value="Rhodanese-like domain"/>
    <property type="match status" value="1"/>
</dbReference>
<dbReference type="HAMAP" id="MF_00021">
    <property type="entry name" value="ThiI"/>
    <property type="match status" value="1"/>
</dbReference>
<dbReference type="InterPro" id="IPR001763">
    <property type="entry name" value="Rhodanese-like_dom"/>
</dbReference>
<dbReference type="InterPro" id="IPR036873">
    <property type="entry name" value="Rhodanese-like_dom_sf"/>
</dbReference>
<dbReference type="InterPro" id="IPR014729">
    <property type="entry name" value="Rossmann-like_a/b/a_fold"/>
</dbReference>
<dbReference type="InterPro" id="IPR020536">
    <property type="entry name" value="ThiI_AANH"/>
</dbReference>
<dbReference type="InterPro" id="IPR054173">
    <property type="entry name" value="ThiI_fer"/>
</dbReference>
<dbReference type="InterPro" id="IPR049961">
    <property type="entry name" value="ThiI_N"/>
</dbReference>
<dbReference type="InterPro" id="IPR026340">
    <property type="entry name" value="THII_Thiazole_biosynth_dom"/>
</dbReference>
<dbReference type="InterPro" id="IPR004114">
    <property type="entry name" value="THUMP_dom"/>
</dbReference>
<dbReference type="InterPro" id="IPR049962">
    <property type="entry name" value="THUMP_ThiI"/>
</dbReference>
<dbReference type="InterPro" id="IPR003720">
    <property type="entry name" value="tRNA_STrfase"/>
</dbReference>
<dbReference type="InterPro" id="IPR050102">
    <property type="entry name" value="tRNA_sulfurtransferase_ThiI"/>
</dbReference>
<dbReference type="NCBIfam" id="TIGR04271">
    <property type="entry name" value="ThiI_C_thiazole"/>
    <property type="match status" value="1"/>
</dbReference>
<dbReference type="NCBIfam" id="TIGR00342">
    <property type="entry name" value="tRNA uracil 4-sulfurtransferase ThiI"/>
    <property type="match status" value="1"/>
</dbReference>
<dbReference type="PANTHER" id="PTHR43209">
    <property type="entry name" value="TRNA SULFURTRANSFERASE"/>
    <property type="match status" value="1"/>
</dbReference>
<dbReference type="PANTHER" id="PTHR43209:SF1">
    <property type="entry name" value="TRNA SULFURTRANSFERASE"/>
    <property type="match status" value="1"/>
</dbReference>
<dbReference type="Pfam" id="PF00581">
    <property type="entry name" value="Rhodanese"/>
    <property type="match status" value="1"/>
</dbReference>
<dbReference type="Pfam" id="PF02568">
    <property type="entry name" value="ThiI"/>
    <property type="match status" value="1"/>
</dbReference>
<dbReference type="Pfam" id="PF22025">
    <property type="entry name" value="ThiI_fer"/>
    <property type="match status" value="1"/>
</dbReference>
<dbReference type="Pfam" id="PF02926">
    <property type="entry name" value="THUMP"/>
    <property type="match status" value="1"/>
</dbReference>
<dbReference type="SMART" id="SM00981">
    <property type="entry name" value="THUMP"/>
    <property type="match status" value="1"/>
</dbReference>
<dbReference type="SUPFAM" id="SSF52402">
    <property type="entry name" value="Adenine nucleotide alpha hydrolases-like"/>
    <property type="match status" value="1"/>
</dbReference>
<dbReference type="SUPFAM" id="SSF52821">
    <property type="entry name" value="Rhodanese/Cell cycle control phosphatase"/>
    <property type="match status" value="1"/>
</dbReference>
<dbReference type="SUPFAM" id="SSF143437">
    <property type="entry name" value="THUMP domain-like"/>
    <property type="match status" value="1"/>
</dbReference>
<dbReference type="PROSITE" id="PS50206">
    <property type="entry name" value="RHODANESE_3"/>
    <property type="match status" value="1"/>
</dbReference>
<dbReference type="PROSITE" id="PS51165">
    <property type="entry name" value="THUMP"/>
    <property type="match status" value="1"/>
</dbReference>
<protein>
    <recommendedName>
        <fullName evidence="1">tRNA sulfurtransferase</fullName>
        <ecNumber evidence="1">2.8.1.4</ecNumber>
    </recommendedName>
    <alternativeName>
        <fullName evidence="1">Sulfur carrier protein ThiS sulfurtransferase</fullName>
    </alternativeName>
    <alternativeName>
        <fullName evidence="1">Thiamine biosynthesis protein ThiI</fullName>
    </alternativeName>
    <alternativeName>
        <fullName evidence="1">tRNA 4-thiouridine synthase</fullName>
    </alternativeName>
</protein>
<accession>Q7VKR6</accession>
<keyword id="KW-0067">ATP-binding</keyword>
<keyword id="KW-0963">Cytoplasm</keyword>
<keyword id="KW-1015">Disulfide bond</keyword>
<keyword id="KW-0547">Nucleotide-binding</keyword>
<keyword id="KW-0676">Redox-active center</keyword>
<keyword id="KW-1185">Reference proteome</keyword>
<keyword id="KW-0694">RNA-binding</keyword>
<keyword id="KW-0784">Thiamine biosynthesis</keyword>
<keyword id="KW-0808">Transferase</keyword>
<keyword id="KW-0820">tRNA-binding</keyword>
<feature type="chain" id="PRO_0000154841" description="tRNA sulfurtransferase">
    <location>
        <begin position="1"/>
        <end position="484"/>
    </location>
</feature>
<feature type="domain" description="THUMP" evidence="1">
    <location>
        <begin position="61"/>
        <end position="165"/>
    </location>
</feature>
<feature type="domain" description="Rhodanese" evidence="1">
    <location>
        <begin position="404"/>
        <end position="483"/>
    </location>
</feature>
<feature type="active site" description="Cysteine persulfide intermediate" evidence="1">
    <location>
        <position position="456"/>
    </location>
</feature>
<feature type="binding site" evidence="1">
    <location>
        <begin position="183"/>
        <end position="184"/>
    </location>
    <ligand>
        <name>ATP</name>
        <dbReference type="ChEBI" id="CHEBI:30616"/>
    </ligand>
</feature>
<feature type="binding site" evidence="1">
    <location>
        <position position="265"/>
    </location>
    <ligand>
        <name>ATP</name>
        <dbReference type="ChEBI" id="CHEBI:30616"/>
    </ligand>
</feature>
<feature type="binding site" evidence="1">
    <location>
        <position position="287"/>
    </location>
    <ligand>
        <name>ATP</name>
        <dbReference type="ChEBI" id="CHEBI:30616"/>
    </ligand>
</feature>
<feature type="binding site" evidence="1">
    <location>
        <position position="296"/>
    </location>
    <ligand>
        <name>ATP</name>
        <dbReference type="ChEBI" id="CHEBI:30616"/>
    </ligand>
</feature>
<feature type="disulfide bond" description="Redox-active" evidence="1">
    <location>
        <begin position="344"/>
        <end position="456"/>
    </location>
</feature>
<comment type="function">
    <text evidence="1">Catalyzes the ATP-dependent transfer of a sulfur to tRNA to produce 4-thiouridine in position 8 of tRNAs, which functions as a near-UV photosensor. Also catalyzes the transfer of sulfur to the sulfur carrier protein ThiS, forming ThiS-thiocarboxylate. This is a step in the synthesis of thiazole, in the thiamine biosynthesis pathway. The sulfur is donated as persulfide by IscS.</text>
</comment>
<comment type="catalytic activity">
    <reaction evidence="1">
        <text>[ThiI sulfur-carrier protein]-S-sulfanyl-L-cysteine + a uridine in tRNA + 2 reduced [2Fe-2S]-[ferredoxin] + ATP + H(+) = [ThiI sulfur-carrier protein]-L-cysteine + a 4-thiouridine in tRNA + 2 oxidized [2Fe-2S]-[ferredoxin] + AMP + diphosphate</text>
        <dbReference type="Rhea" id="RHEA:24176"/>
        <dbReference type="Rhea" id="RHEA-COMP:10000"/>
        <dbReference type="Rhea" id="RHEA-COMP:10001"/>
        <dbReference type="Rhea" id="RHEA-COMP:13337"/>
        <dbReference type="Rhea" id="RHEA-COMP:13338"/>
        <dbReference type="Rhea" id="RHEA-COMP:13339"/>
        <dbReference type="Rhea" id="RHEA-COMP:13340"/>
        <dbReference type="ChEBI" id="CHEBI:15378"/>
        <dbReference type="ChEBI" id="CHEBI:29950"/>
        <dbReference type="ChEBI" id="CHEBI:30616"/>
        <dbReference type="ChEBI" id="CHEBI:33019"/>
        <dbReference type="ChEBI" id="CHEBI:33737"/>
        <dbReference type="ChEBI" id="CHEBI:33738"/>
        <dbReference type="ChEBI" id="CHEBI:61963"/>
        <dbReference type="ChEBI" id="CHEBI:65315"/>
        <dbReference type="ChEBI" id="CHEBI:136798"/>
        <dbReference type="ChEBI" id="CHEBI:456215"/>
        <dbReference type="EC" id="2.8.1.4"/>
    </reaction>
</comment>
<comment type="catalytic activity">
    <reaction evidence="1">
        <text>[ThiS sulfur-carrier protein]-C-terminal Gly-Gly-AMP + S-sulfanyl-L-cysteinyl-[cysteine desulfurase] + AH2 = [ThiS sulfur-carrier protein]-C-terminal-Gly-aminoethanethioate + L-cysteinyl-[cysteine desulfurase] + A + AMP + 2 H(+)</text>
        <dbReference type="Rhea" id="RHEA:43340"/>
        <dbReference type="Rhea" id="RHEA-COMP:12157"/>
        <dbReference type="Rhea" id="RHEA-COMP:12158"/>
        <dbReference type="Rhea" id="RHEA-COMP:12910"/>
        <dbReference type="Rhea" id="RHEA-COMP:19908"/>
        <dbReference type="ChEBI" id="CHEBI:13193"/>
        <dbReference type="ChEBI" id="CHEBI:15378"/>
        <dbReference type="ChEBI" id="CHEBI:17499"/>
        <dbReference type="ChEBI" id="CHEBI:29950"/>
        <dbReference type="ChEBI" id="CHEBI:61963"/>
        <dbReference type="ChEBI" id="CHEBI:90618"/>
        <dbReference type="ChEBI" id="CHEBI:232372"/>
        <dbReference type="ChEBI" id="CHEBI:456215"/>
    </reaction>
</comment>
<comment type="pathway">
    <text evidence="1">Cofactor biosynthesis; thiamine diphosphate biosynthesis.</text>
</comment>
<comment type="subcellular location">
    <subcellularLocation>
        <location evidence="1">Cytoplasm</location>
    </subcellularLocation>
</comment>
<comment type="similarity">
    <text evidence="1">Belongs to the ThiI family.</text>
</comment>
<evidence type="ECO:0000255" key="1">
    <source>
        <dbReference type="HAMAP-Rule" id="MF_00021"/>
    </source>
</evidence>
<organism>
    <name type="scientific">Haemophilus ducreyi (strain 35000HP / ATCC 700724)</name>
    <dbReference type="NCBI Taxonomy" id="233412"/>
    <lineage>
        <taxon>Bacteria</taxon>
        <taxon>Pseudomonadati</taxon>
        <taxon>Pseudomonadota</taxon>
        <taxon>Gammaproteobacteria</taxon>
        <taxon>Pasteurellales</taxon>
        <taxon>Pasteurellaceae</taxon>
        <taxon>Haemophilus</taxon>
    </lineage>
</organism>
<gene>
    <name evidence="1" type="primary">thiI</name>
    <name type="ordered locus">HD_1806</name>
</gene>
<sequence>MKFIIKLFPEIMIKSDSVRKRFIKILTSNIRNVLLRETEQVAVVRNWDFIEVRAKVAEEIPLILDLLKRTPGIHHILEVQEMPFTSLHDIFEHTFAKYQNQLVDKTFCVRVRRKGKHEFSSLDVEKYVGGGLNQRIESARVKLTKPDVTVRIDINGDKMLLVEARHEGLGGYPIGTQEDVLSLISGGFDSGVSSYMFIRRGSRVHYCFFNLGGASHEIGVKQMAYHIWSRYSTSHKVRFVAINFESVVGEILEKVDNGQMGVVLKRMMVRAASQIAERFAIQAIVTGEALGQVSSQTLTNLRLIDKAADSLVLRPLITHDKEKIIALAKQIGTDDIAKSMPEFCGVISKNPTVKAIESKIVEEEGHFDFDVLEKAVQNATYLDIREIALQTEKDVVAVEATSALTEKDIILDIRSPEEMDEKPLVLAQAQVIELPFYKLSTQFAHLDQSKNYLLYCERGVMSKLQALYLKEKGYQNVKVFNLPK</sequence>
<reference key="1">
    <citation type="submission" date="2003-06" db="EMBL/GenBank/DDBJ databases">
        <title>The complete genome sequence of Haemophilus ducreyi.</title>
        <authorList>
            <person name="Munson R.S. Jr."/>
            <person name="Ray W.C."/>
            <person name="Mahairas G."/>
            <person name="Sabo P."/>
            <person name="Mungur R."/>
            <person name="Johnson L."/>
            <person name="Nguyen D."/>
            <person name="Wang J."/>
            <person name="Forst C."/>
            <person name="Hood L."/>
        </authorList>
    </citation>
    <scope>NUCLEOTIDE SEQUENCE [LARGE SCALE GENOMIC DNA]</scope>
    <source>
        <strain>35000HP / ATCC 700724</strain>
    </source>
</reference>